<gene>
    <name evidence="1" type="primary">ahcY</name>
    <name type="ordered locus">Cpha266_0921</name>
</gene>
<organism>
    <name type="scientific">Chlorobium phaeobacteroides (strain DSM 266 / SMG 266 / 2430)</name>
    <dbReference type="NCBI Taxonomy" id="290317"/>
    <lineage>
        <taxon>Bacteria</taxon>
        <taxon>Pseudomonadati</taxon>
        <taxon>Chlorobiota</taxon>
        <taxon>Chlorobiia</taxon>
        <taxon>Chlorobiales</taxon>
        <taxon>Chlorobiaceae</taxon>
        <taxon>Chlorobium/Pelodictyon group</taxon>
        <taxon>Chlorobium</taxon>
    </lineage>
</organism>
<comment type="function">
    <text evidence="1">May play a key role in the regulation of the intracellular concentration of adenosylhomocysteine.</text>
</comment>
<comment type="catalytic activity">
    <reaction evidence="1">
        <text>S-adenosyl-L-homocysteine + H2O = L-homocysteine + adenosine</text>
        <dbReference type="Rhea" id="RHEA:21708"/>
        <dbReference type="ChEBI" id="CHEBI:15377"/>
        <dbReference type="ChEBI" id="CHEBI:16335"/>
        <dbReference type="ChEBI" id="CHEBI:57856"/>
        <dbReference type="ChEBI" id="CHEBI:58199"/>
        <dbReference type="EC" id="3.13.2.1"/>
    </reaction>
</comment>
<comment type="cofactor">
    <cofactor evidence="1">
        <name>NAD(+)</name>
        <dbReference type="ChEBI" id="CHEBI:57540"/>
    </cofactor>
    <text evidence="1">Binds 1 NAD(+) per subunit.</text>
</comment>
<comment type="pathway">
    <text evidence="1">Amino-acid biosynthesis; L-homocysteine biosynthesis; L-homocysteine from S-adenosyl-L-homocysteine: step 1/1.</text>
</comment>
<comment type="subcellular location">
    <subcellularLocation>
        <location evidence="1">Cytoplasm</location>
    </subcellularLocation>
</comment>
<comment type="similarity">
    <text evidence="1">Belongs to the adenosylhomocysteinase family.</text>
</comment>
<name>SAHH_CHLPD</name>
<protein>
    <recommendedName>
        <fullName evidence="1">Adenosylhomocysteinase</fullName>
        <ecNumber evidence="1">3.13.2.1</ecNumber>
    </recommendedName>
    <alternativeName>
        <fullName evidence="1">S-adenosyl-L-homocysteine hydrolase</fullName>
        <shortName evidence="1">AdoHcyase</shortName>
    </alternativeName>
</protein>
<sequence length="471" mass="52434">MTIEAEVLAYKVADMSLAEWGRKEIDIAEKEMPGLMATRKKYAGQKPLKGARIAGSLHMTIQTAVLIETLVELGADVRWASCNIFSTQDHAAAAIAKAGIPVFAWKGETLDEYWWCTRQILEFEGGKGPHLIVDDGGDATLMIHLGYKIEIDPSLLDKTPGNIEEKALFQQLREVYEEDSQRWHNVAAEMKGVSEETTTGVHRLYQMMEKEELLFPAINVNDSVTKSKFDNLYGCRESLADGIKRATDVMVAGKVVVVLGYGDVGKGSARSMRAYGARVIVTEIDPICALQAAMEGYEVNTMDEAVTEGNIFVTTTGNKDVITLEHMKKMKGEAIICNIGHFDNEIQVEPLNNYAGATKLNIKPQVDKYTFEDGHAIYLLAEGRLVNLGCATGHPSFVMSNSFTNQTLAQLELWTRDYAIDVYRLPKQLDEEVARLHLEQLGVKLTTLTNEQAEYIGVPLEGPYKPEHYRY</sequence>
<accession>A1BEZ2</accession>
<feature type="chain" id="PRO_1000024723" description="Adenosylhomocysteinase">
    <location>
        <begin position="1"/>
        <end position="471"/>
    </location>
</feature>
<feature type="binding site" evidence="1">
    <location>
        <position position="60"/>
    </location>
    <ligand>
        <name>substrate</name>
    </ligand>
</feature>
<feature type="binding site" evidence="1">
    <location>
        <position position="135"/>
    </location>
    <ligand>
        <name>substrate</name>
    </ligand>
</feature>
<feature type="binding site" evidence="1">
    <location>
        <position position="196"/>
    </location>
    <ligand>
        <name>substrate</name>
    </ligand>
</feature>
<feature type="binding site" evidence="1">
    <location>
        <begin position="197"/>
        <end position="199"/>
    </location>
    <ligand>
        <name>NAD(+)</name>
        <dbReference type="ChEBI" id="CHEBI:57540"/>
    </ligand>
</feature>
<feature type="binding site" evidence="1">
    <location>
        <position position="226"/>
    </location>
    <ligand>
        <name>substrate</name>
    </ligand>
</feature>
<feature type="binding site" evidence="1">
    <location>
        <position position="230"/>
    </location>
    <ligand>
        <name>substrate</name>
    </ligand>
</feature>
<feature type="binding site" evidence="1">
    <location>
        <position position="231"/>
    </location>
    <ligand>
        <name>NAD(+)</name>
        <dbReference type="ChEBI" id="CHEBI:57540"/>
    </ligand>
</feature>
<feature type="binding site" evidence="1">
    <location>
        <begin position="260"/>
        <end position="265"/>
    </location>
    <ligand>
        <name>NAD(+)</name>
        <dbReference type="ChEBI" id="CHEBI:57540"/>
    </ligand>
</feature>
<feature type="binding site" evidence="1">
    <location>
        <position position="283"/>
    </location>
    <ligand>
        <name>NAD(+)</name>
        <dbReference type="ChEBI" id="CHEBI:57540"/>
    </ligand>
</feature>
<feature type="binding site" evidence="1">
    <location>
        <position position="318"/>
    </location>
    <ligand>
        <name>NAD(+)</name>
        <dbReference type="ChEBI" id="CHEBI:57540"/>
    </ligand>
</feature>
<feature type="binding site" evidence="1">
    <location>
        <begin position="339"/>
        <end position="341"/>
    </location>
    <ligand>
        <name>NAD(+)</name>
        <dbReference type="ChEBI" id="CHEBI:57540"/>
    </ligand>
</feature>
<feature type="binding site" evidence="1">
    <location>
        <position position="387"/>
    </location>
    <ligand>
        <name>NAD(+)</name>
        <dbReference type="ChEBI" id="CHEBI:57540"/>
    </ligand>
</feature>
<proteinExistence type="inferred from homology"/>
<evidence type="ECO:0000255" key="1">
    <source>
        <dbReference type="HAMAP-Rule" id="MF_00563"/>
    </source>
</evidence>
<dbReference type="EC" id="3.13.2.1" evidence="1"/>
<dbReference type="EMBL" id="CP000492">
    <property type="protein sequence ID" value="ABL64969.1"/>
    <property type="molecule type" value="Genomic_DNA"/>
</dbReference>
<dbReference type="RefSeq" id="WP_011744796.1">
    <property type="nucleotide sequence ID" value="NC_008639.1"/>
</dbReference>
<dbReference type="SMR" id="A1BEZ2"/>
<dbReference type="STRING" id="290317.Cpha266_0921"/>
<dbReference type="KEGG" id="cph:Cpha266_0921"/>
<dbReference type="eggNOG" id="COG0499">
    <property type="taxonomic scope" value="Bacteria"/>
</dbReference>
<dbReference type="HOGENOM" id="CLU_025194_2_1_10"/>
<dbReference type="OrthoDB" id="9802717at2"/>
<dbReference type="UniPathway" id="UPA00314">
    <property type="reaction ID" value="UER00076"/>
</dbReference>
<dbReference type="Proteomes" id="UP000008701">
    <property type="component" value="Chromosome"/>
</dbReference>
<dbReference type="GO" id="GO:0005829">
    <property type="term" value="C:cytosol"/>
    <property type="evidence" value="ECO:0007669"/>
    <property type="project" value="TreeGrafter"/>
</dbReference>
<dbReference type="GO" id="GO:0004013">
    <property type="term" value="F:adenosylhomocysteinase activity"/>
    <property type="evidence" value="ECO:0007669"/>
    <property type="project" value="UniProtKB-UniRule"/>
</dbReference>
<dbReference type="GO" id="GO:0071269">
    <property type="term" value="P:L-homocysteine biosynthetic process"/>
    <property type="evidence" value="ECO:0007669"/>
    <property type="project" value="UniProtKB-UniRule"/>
</dbReference>
<dbReference type="GO" id="GO:0006730">
    <property type="term" value="P:one-carbon metabolic process"/>
    <property type="evidence" value="ECO:0007669"/>
    <property type="project" value="UniProtKB-KW"/>
</dbReference>
<dbReference type="GO" id="GO:0033353">
    <property type="term" value="P:S-adenosylmethionine cycle"/>
    <property type="evidence" value="ECO:0007669"/>
    <property type="project" value="TreeGrafter"/>
</dbReference>
<dbReference type="CDD" id="cd00401">
    <property type="entry name" value="SAHH"/>
    <property type="match status" value="1"/>
</dbReference>
<dbReference type="FunFam" id="3.40.50.720:FF:000004">
    <property type="entry name" value="Adenosylhomocysteinase"/>
    <property type="match status" value="1"/>
</dbReference>
<dbReference type="Gene3D" id="3.40.50.1480">
    <property type="entry name" value="Adenosylhomocysteinase-like"/>
    <property type="match status" value="1"/>
</dbReference>
<dbReference type="Gene3D" id="3.40.50.720">
    <property type="entry name" value="NAD(P)-binding Rossmann-like Domain"/>
    <property type="match status" value="1"/>
</dbReference>
<dbReference type="HAMAP" id="MF_00563">
    <property type="entry name" value="AdoHcyase"/>
    <property type="match status" value="1"/>
</dbReference>
<dbReference type="InterPro" id="IPR042172">
    <property type="entry name" value="Adenosylhomocyst_ase-like_sf"/>
</dbReference>
<dbReference type="InterPro" id="IPR000043">
    <property type="entry name" value="Adenosylhomocysteinase-like"/>
</dbReference>
<dbReference type="InterPro" id="IPR015878">
    <property type="entry name" value="Ado_hCys_hydrolase_NAD-bd"/>
</dbReference>
<dbReference type="InterPro" id="IPR036291">
    <property type="entry name" value="NAD(P)-bd_dom_sf"/>
</dbReference>
<dbReference type="InterPro" id="IPR020082">
    <property type="entry name" value="S-Ado-L-homoCys_hydrolase_CS"/>
</dbReference>
<dbReference type="NCBIfam" id="TIGR00936">
    <property type="entry name" value="ahcY"/>
    <property type="match status" value="1"/>
</dbReference>
<dbReference type="NCBIfam" id="NF004005">
    <property type="entry name" value="PRK05476.2-3"/>
    <property type="match status" value="1"/>
</dbReference>
<dbReference type="PANTHER" id="PTHR23420">
    <property type="entry name" value="ADENOSYLHOMOCYSTEINASE"/>
    <property type="match status" value="1"/>
</dbReference>
<dbReference type="PANTHER" id="PTHR23420:SF0">
    <property type="entry name" value="ADENOSYLHOMOCYSTEINASE"/>
    <property type="match status" value="1"/>
</dbReference>
<dbReference type="Pfam" id="PF05221">
    <property type="entry name" value="AdoHcyase"/>
    <property type="match status" value="1"/>
</dbReference>
<dbReference type="Pfam" id="PF00670">
    <property type="entry name" value="AdoHcyase_NAD"/>
    <property type="match status" value="1"/>
</dbReference>
<dbReference type="PIRSF" id="PIRSF001109">
    <property type="entry name" value="Ad_hcy_hydrolase"/>
    <property type="match status" value="1"/>
</dbReference>
<dbReference type="SMART" id="SM00996">
    <property type="entry name" value="AdoHcyase"/>
    <property type="match status" value="1"/>
</dbReference>
<dbReference type="SMART" id="SM00997">
    <property type="entry name" value="AdoHcyase_NAD"/>
    <property type="match status" value="1"/>
</dbReference>
<dbReference type="SUPFAM" id="SSF52283">
    <property type="entry name" value="Formate/glycerate dehydrogenase catalytic domain-like"/>
    <property type="match status" value="1"/>
</dbReference>
<dbReference type="SUPFAM" id="SSF51735">
    <property type="entry name" value="NAD(P)-binding Rossmann-fold domains"/>
    <property type="match status" value="1"/>
</dbReference>
<dbReference type="PROSITE" id="PS00738">
    <property type="entry name" value="ADOHCYASE_1"/>
    <property type="match status" value="1"/>
</dbReference>
<dbReference type="PROSITE" id="PS00739">
    <property type="entry name" value="ADOHCYASE_2"/>
    <property type="match status" value="1"/>
</dbReference>
<reference key="1">
    <citation type="submission" date="2006-12" db="EMBL/GenBank/DDBJ databases">
        <title>Complete sequence of Chlorobium phaeobacteroides DSM 266.</title>
        <authorList>
            <consortium name="US DOE Joint Genome Institute"/>
            <person name="Copeland A."/>
            <person name="Lucas S."/>
            <person name="Lapidus A."/>
            <person name="Barry K."/>
            <person name="Detter J.C."/>
            <person name="Glavina del Rio T."/>
            <person name="Hammon N."/>
            <person name="Israni S."/>
            <person name="Pitluck S."/>
            <person name="Goltsman E."/>
            <person name="Schmutz J."/>
            <person name="Larimer F."/>
            <person name="Land M."/>
            <person name="Hauser L."/>
            <person name="Mikhailova N."/>
            <person name="Li T."/>
            <person name="Overmann J."/>
            <person name="Bryant D.A."/>
            <person name="Richardson P."/>
        </authorList>
    </citation>
    <scope>NUCLEOTIDE SEQUENCE [LARGE SCALE GENOMIC DNA]</scope>
    <source>
        <strain>DSM 266 / SMG 266 / 2430</strain>
    </source>
</reference>
<keyword id="KW-0963">Cytoplasm</keyword>
<keyword id="KW-0378">Hydrolase</keyword>
<keyword id="KW-0520">NAD</keyword>
<keyword id="KW-0554">One-carbon metabolism</keyword>
<keyword id="KW-1185">Reference proteome</keyword>